<reference key="1">
    <citation type="journal article" date="2005" name="Science">
        <title>Extensive DNA inversions in the B. fragilis genome control variable gene expression.</title>
        <authorList>
            <person name="Cerdeno-Tarraga A.-M."/>
            <person name="Patrick S."/>
            <person name="Crossman L.C."/>
            <person name="Blakely G."/>
            <person name="Abratt V."/>
            <person name="Lennard N."/>
            <person name="Poxton I."/>
            <person name="Duerden B."/>
            <person name="Harris B."/>
            <person name="Quail M.A."/>
            <person name="Barron A."/>
            <person name="Clark L."/>
            <person name="Corton C."/>
            <person name="Doggett J."/>
            <person name="Holden M.T.G."/>
            <person name="Larke N."/>
            <person name="Line A."/>
            <person name="Lord A."/>
            <person name="Norbertczak H."/>
            <person name="Ormond D."/>
            <person name="Price C."/>
            <person name="Rabbinowitsch E."/>
            <person name="Woodward J."/>
            <person name="Barrell B.G."/>
            <person name="Parkhill J."/>
        </authorList>
    </citation>
    <scope>NUCLEOTIDE SEQUENCE [LARGE SCALE GENOMIC DNA]</scope>
    <source>
        <strain>ATCC 25285 / DSM 2151 / CCUG 4856 / JCM 11019 / LMG 10263 / NCTC 9343 / Onslow / VPI 2553 / EN-2</strain>
    </source>
</reference>
<sequence>MSENLIIFNAKVVTPLGFSARKGKEMAELRILEKATVEVVDGIITYVGPNRGEVRDGYYHHFWHYNARGKCLLPGFVDSHTHFVFGGERAEEFSWRLKGESYMSIMQRGGGIASTVQATRELSFIHLRSKAEGLLKKMTAMGITTVEGKSGYGLNRETELLQLKVMRSLNKDEGVRVDIVPTFLGAHALPDEYKERPDDYIDFLIRELLPVIQRDSLAEFCDVFCEEGVFSIEQSRRLLTAAGDYGLLPKLHADEIVPLGGAELAAELGAVSADHLLHASDAGIEAMARKGVVATLLPLTAFALKEPYARGRDMIDAGCAVALATDLNPGSCFSGSIPLTFALACIHMQLTVEEAITALTLNGAAALNRADSIGSIEVGKKGDFVVLDSDNYHILPYYVGMNCVNTTIKGGMLYPSV</sequence>
<organism>
    <name type="scientific">Bacteroides fragilis (strain ATCC 25285 / DSM 2151 / CCUG 4856 / JCM 11019 / LMG 10263 / NCTC 9343 / Onslow / VPI 2553 / EN-2)</name>
    <dbReference type="NCBI Taxonomy" id="272559"/>
    <lineage>
        <taxon>Bacteria</taxon>
        <taxon>Pseudomonadati</taxon>
        <taxon>Bacteroidota</taxon>
        <taxon>Bacteroidia</taxon>
        <taxon>Bacteroidales</taxon>
        <taxon>Bacteroidaceae</taxon>
        <taxon>Bacteroides</taxon>
    </lineage>
</organism>
<evidence type="ECO:0000255" key="1">
    <source>
        <dbReference type="HAMAP-Rule" id="MF_00372"/>
    </source>
</evidence>
<comment type="function">
    <text evidence="1">Catalyzes the hydrolytic cleavage of the carbon-nitrogen bond in imidazolone-5-propanoate to yield N-formimidoyl-L-glutamate. It is the third step in the universal histidine degradation pathway.</text>
</comment>
<comment type="catalytic activity">
    <reaction evidence="1">
        <text>4-imidazolone-5-propanoate + H2O = N-formimidoyl-L-glutamate</text>
        <dbReference type="Rhea" id="RHEA:23660"/>
        <dbReference type="ChEBI" id="CHEBI:15377"/>
        <dbReference type="ChEBI" id="CHEBI:58928"/>
        <dbReference type="ChEBI" id="CHEBI:77893"/>
        <dbReference type="EC" id="3.5.2.7"/>
    </reaction>
</comment>
<comment type="cofactor">
    <cofactor evidence="1">
        <name>Zn(2+)</name>
        <dbReference type="ChEBI" id="CHEBI:29105"/>
    </cofactor>
    <cofactor evidence="1">
        <name>Fe(3+)</name>
        <dbReference type="ChEBI" id="CHEBI:29034"/>
    </cofactor>
    <text evidence="1">Binds 1 zinc or iron ion per subunit.</text>
</comment>
<comment type="pathway">
    <text evidence="1">Amino-acid degradation; L-histidine degradation into L-glutamate; N-formimidoyl-L-glutamate from L-histidine: step 3/3.</text>
</comment>
<comment type="subcellular location">
    <subcellularLocation>
        <location evidence="1">Cytoplasm</location>
    </subcellularLocation>
</comment>
<comment type="similarity">
    <text evidence="1">Belongs to the metallo-dependent hydrolases superfamily. HutI family.</text>
</comment>
<accession>Q5L8E4</accession>
<feature type="chain" id="PRO_0000306436" description="Imidazolonepropionase">
    <location>
        <begin position="1"/>
        <end position="417"/>
    </location>
</feature>
<feature type="binding site" evidence="1">
    <location>
        <position position="80"/>
    </location>
    <ligand>
        <name>Fe(3+)</name>
        <dbReference type="ChEBI" id="CHEBI:29034"/>
    </ligand>
</feature>
<feature type="binding site" evidence="1">
    <location>
        <position position="80"/>
    </location>
    <ligand>
        <name>Zn(2+)</name>
        <dbReference type="ChEBI" id="CHEBI:29105"/>
    </ligand>
</feature>
<feature type="binding site" evidence="1">
    <location>
        <position position="82"/>
    </location>
    <ligand>
        <name>Fe(3+)</name>
        <dbReference type="ChEBI" id="CHEBI:29034"/>
    </ligand>
</feature>
<feature type="binding site" evidence="1">
    <location>
        <position position="82"/>
    </location>
    <ligand>
        <name>Zn(2+)</name>
        <dbReference type="ChEBI" id="CHEBI:29105"/>
    </ligand>
</feature>
<feature type="binding site" evidence="1">
    <location>
        <position position="89"/>
    </location>
    <ligand>
        <name>4-imidazolone-5-propanoate</name>
        <dbReference type="ChEBI" id="CHEBI:77893"/>
    </ligand>
</feature>
<feature type="binding site" evidence="1">
    <location>
        <position position="152"/>
    </location>
    <ligand>
        <name>4-imidazolone-5-propanoate</name>
        <dbReference type="ChEBI" id="CHEBI:77893"/>
    </ligand>
</feature>
<feature type="binding site" evidence="1">
    <location>
        <position position="152"/>
    </location>
    <ligand>
        <name>N-formimidoyl-L-glutamate</name>
        <dbReference type="ChEBI" id="CHEBI:58928"/>
    </ligand>
</feature>
<feature type="binding site" evidence="1">
    <location>
        <position position="187"/>
    </location>
    <ligand>
        <name>4-imidazolone-5-propanoate</name>
        <dbReference type="ChEBI" id="CHEBI:77893"/>
    </ligand>
</feature>
<feature type="binding site" evidence="1">
    <location>
        <position position="252"/>
    </location>
    <ligand>
        <name>Fe(3+)</name>
        <dbReference type="ChEBI" id="CHEBI:29034"/>
    </ligand>
</feature>
<feature type="binding site" evidence="1">
    <location>
        <position position="252"/>
    </location>
    <ligand>
        <name>Zn(2+)</name>
        <dbReference type="ChEBI" id="CHEBI:29105"/>
    </ligand>
</feature>
<feature type="binding site" evidence="1">
    <location>
        <position position="255"/>
    </location>
    <ligand>
        <name>4-imidazolone-5-propanoate</name>
        <dbReference type="ChEBI" id="CHEBI:77893"/>
    </ligand>
</feature>
<feature type="binding site" evidence="1">
    <location>
        <position position="326"/>
    </location>
    <ligand>
        <name>Fe(3+)</name>
        <dbReference type="ChEBI" id="CHEBI:29034"/>
    </ligand>
</feature>
<feature type="binding site" evidence="1">
    <location>
        <position position="326"/>
    </location>
    <ligand>
        <name>Zn(2+)</name>
        <dbReference type="ChEBI" id="CHEBI:29105"/>
    </ligand>
</feature>
<feature type="binding site" evidence="1">
    <location>
        <position position="328"/>
    </location>
    <ligand>
        <name>N-formimidoyl-L-glutamate</name>
        <dbReference type="ChEBI" id="CHEBI:58928"/>
    </ligand>
</feature>
<feature type="binding site" evidence="1">
    <location>
        <position position="330"/>
    </location>
    <ligand>
        <name>N-formimidoyl-L-glutamate</name>
        <dbReference type="ChEBI" id="CHEBI:58928"/>
    </ligand>
</feature>
<feature type="binding site" evidence="1">
    <location>
        <position position="331"/>
    </location>
    <ligand>
        <name>4-imidazolone-5-propanoate</name>
        <dbReference type="ChEBI" id="CHEBI:77893"/>
    </ligand>
</feature>
<protein>
    <recommendedName>
        <fullName evidence="1">Imidazolonepropionase</fullName>
        <ecNumber evidence="1">3.5.2.7</ecNumber>
    </recommendedName>
    <alternativeName>
        <fullName evidence="1">Imidazolone-5-propionate hydrolase</fullName>
    </alternativeName>
</protein>
<dbReference type="EC" id="3.5.2.7" evidence="1"/>
<dbReference type="EMBL" id="CR626927">
    <property type="protein sequence ID" value="CAH09644.1"/>
    <property type="molecule type" value="Genomic_DNA"/>
</dbReference>
<dbReference type="RefSeq" id="WP_005797648.1">
    <property type="nucleotide sequence ID" value="NZ_UFTH01000001.1"/>
</dbReference>
<dbReference type="SMR" id="Q5L8E4"/>
<dbReference type="PaxDb" id="272559-BF9343_3863"/>
<dbReference type="DNASU" id="3289168"/>
<dbReference type="GeneID" id="60369255"/>
<dbReference type="KEGG" id="bfs:BF9343_3863"/>
<dbReference type="eggNOG" id="COG1228">
    <property type="taxonomic scope" value="Bacteria"/>
</dbReference>
<dbReference type="HOGENOM" id="CLU_041647_0_1_10"/>
<dbReference type="UniPathway" id="UPA00379">
    <property type="reaction ID" value="UER00551"/>
</dbReference>
<dbReference type="Proteomes" id="UP000006731">
    <property type="component" value="Chromosome"/>
</dbReference>
<dbReference type="GO" id="GO:0005737">
    <property type="term" value="C:cytoplasm"/>
    <property type="evidence" value="ECO:0007669"/>
    <property type="project" value="UniProtKB-SubCell"/>
</dbReference>
<dbReference type="GO" id="GO:0050480">
    <property type="term" value="F:imidazolonepropionase activity"/>
    <property type="evidence" value="ECO:0007669"/>
    <property type="project" value="UniProtKB-UniRule"/>
</dbReference>
<dbReference type="GO" id="GO:0005506">
    <property type="term" value="F:iron ion binding"/>
    <property type="evidence" value="ECO:0007669"/>
    <property type="project" value="UniProtKB-UniRule"/>
</dbReference>
<dbReference type="GO" id="GO:0008270">
    <property type="term" value="F:zinc ion binding"/>
    <property type="evidence" value="ECO:0007669"/>
    <property type="project" value="UniProtKB-UniRule"/>
</dbReference>
<dbReference type="GO" id="GO:0019556">
    <property type="term" value="P:L-histidine catabolic process to glutamate and formamide"/>
    <property type="evidence" value="ECO:0007669"/>
    <property type="project" value="UniProtKB-UniPathway"/>
</dbReference>
<dbReference type="GO" id="GO:0019557">
    <property type="term" value="P:L-histidine catabolic process to glutamate and formate"/>
    <property type="evidence" value="ECO:0007669"/>
    <property type="project" value="UniProtKB-UniPathway"/>
</dbReference>
<dbReference type="CDD" id="cd01296">
    <property type="entry name" value="Imidazolone-5PH"/>
    <property type="match status" value="1"/>
</dbReference>
<dbReference type="FunFam" id="3.20.20.140:FF:000007">
    <property type="entry name" value="Imidazolonepropionase"/>
    <property type="match status" value="1"/>
</dbReference>
<dbReference type="Gene3D" id="3.20.20.140">
    <property type="entry name" value="Metal-dependent hydrolases"/>
    <property type="match status" value="1"/>
</dbReference>
<dbReference type="Gene3D" id="2.30.40.10">
    <property type="entry name" value="Urease, subunit C, domain 1"/>
    <property type="match status" value="1"/>
</dbReference>
<dbReference type="HAMAP" id="MF_00372">
    <property type="entry name" value="HutI"/>
    <property type="match status" value="1"/>
</dbReference>
<dbReference type="InterPro" id="IPR006680">
    <property type="entry name" value="Amidohydro-rel"/>
</dbReference>
<dbReference type="InterPro" id="IPR005920">
    <property type="entry name" value="HutI"/>
</dbReference>
<dbReference type="InterPro" id="IPR011059">
    <property type="entry name" value="Metal-dep_hydrolase_composite"/>
</dbReference>
<dbReference type="InterPro" id="IPR032466">
    <property type="entry name" value="Metal_Hydrolase"/>
</dbReference>
<dbReference type="NCBIfam" id="TIGR01224">
    <property type="entry name" value="hutI"/>
    <property type="match status" value="1"/>
</dbReference>
<dbReference type="PANTHER" id="PTHR42752">
    <property type="entry name" value="IMIDAZOLONEPROPIONASE"/>
    <property type="match status" value="1"/>
</dbReference>
<dbReference type="PANTHER" id="PTHR42752:SF1">
    <property type="entry name" value="IMIDAZOLONEPROPIONASE-RELATED"/>
    <property type="match status" value="1"/>
</dbReference>
<dbReference type="Pfam" id="PF01979">
    <property type="entry name" value="Amidohydro_1"/>
    <property type="match status" value="1"/>
</dbReference>
<dbReference type="SUPFAM" id="SSF51338">
    <property type="entry name" value="Composite domain of metallo-dependent hydrolases"/>
    <property type="match status" value="1"/>
</dbReference>
<dbReference type="SUPFAM" id="SSF51556">
    <property type="entry name" value="Metallo-dependent hydrolases"/>
    <property type="match status" value="1"/>
</dbReference>
<keyword id="KW-0963">Cytoplasm</keyword>
<keyword id="KW-0369">Histidine metabolism</keyword>
<keyword id="KW-0378">Hydrolase</keyword>
<keyword id="KW-0408">Iron</keyword>
<keyword id="KW-0479">Metal-binding</keyword>
<keyword id="KW-0862">Zinc</keyword>
<gene>
    <name evidence="1" type="primary">hutI</name>
    <name type="ordered locus">BF3968</name>
</gene>
<proteinExistence type="inferred from homology"/>
<name>HUTI_BACFN</name>